<gene>
    <name type="primary">ycfP</name>
    <name type="ordered locus">SF1112</name>
    <name type="ordered locus">S1192</name>
</gene>
<evidence type="ECO:0000305" key="1"/>
<dbReference type="EMBL" id="AE005674">
    <property type="protein sequence ID" value="AAN42730.2"/>
    <property type="molecule type" value="Genomic_DNA"/>
</dbReference>
<dbReference type="EMBL" id="AE014073">
    <property type="protein sequence ID" value="AAP16618.1"/>
    <property type="molecule type" value="Genomic_DNA"/>
</dbReference>
<dbReference type="RefSeq" id="NP_707023.2">
    <property type="nucleotide sequence ID" value="NC_004337.2"/>
</dbReference>
<dbReference type="RefSeq" id="WP_000587933.1">
    <property type="nucleotide sequence ID" value="NZ_WPGW01000001.1"/>
</dbReference>
<dbReference type="SMR" id="P0A8E4"/>
<dbReference type="STRING" id="198214.SF1112"/>
<dbReference type="ESTHER" id="shifl-ycfp">
    <property type="family name" value="abh_upf00227"/>
</dbReference>
<dbReference type="PaxDb" id="198214-SF1112"/>
<dbReference type="GeneID" id="1023394"/>
<dbReference type="GeneID" id="93776300"/>
<dbReference type="KEGG" id="sfl:SF1112"/>
<dbReference type="KEGG" id="sfx:S1192"/>
<dbReference type="PATRIC" id="fig|198214.7.peg.1302"/>
<dbReference type="HOGENOM" id="CLU_128769_0_0_6"/>
<dbReference type="Proteomes" id="UP000001006">
    <property type="component" value="Chromosome"/>
</dbReference>
<dbReference type="Proteomes" id="UP000002673">
    <property type="component" value="Chromosome"/>
</dbReference>
<dbReference type="FunFam" id="3.40.50.1820:FF:000007">
    <property type="entry name" value="UPF0227 protein YcfP"/>
    <property type="match status" value="1"/>
</dbReference>
<dbReference type="Gene3D" id="3.40.50.1820">
    <property type="entry name" value="alpha/beta hydrolase"/>
    <property type="match status" value="1"/>
</dbReference>
<dbReference type="HAMAP" id="MF_01047">
    <property type="entry name" value="UPF0227"/>
    <property type="match status" value="1"/>
</dbReference>
<dbReference type="InterPro" id="IPR029058">
    <property type="entry name" value="AB_hydrolase_fold"/>
</dbReference>
<dbReference type="InterPro" id="IPR022987">
    <property type="entry name" value="UPF0227"/>
</dbReference>
<dbReference type="InterPro" id="IPR008886">
    <property type="entry name" value="UPF0227/Esterase_YqiA"/>
</dbReference>
<dbReference type="NCBIfam" id="NF003431">
    <property type="entry name" value="PRK04940.1"/>
    <property type="match status" value="1"/>
</dbReference>
<dbReference type="PANTHER" id="PTHR35602">
    <property type="entry name" value="ESTERASE YQIA-RELATED"/>
    <property type="match status" value="1"/>
</dbReference>
<dbReference type="PANTHER" id="PTHR35602:SF2">
    <property type="entry name" value="UPF0227 PROTEIN YCFP"/>
    <property type="match status" value="1"/>
</dbReference>
<dbReference type="Pfam" id="PF05728">
    <property type="entry name" value="UPF0227"/>
    <property type="match status" value="1"/>
</dbReference>
<dbReference type="SUPFAM" id="SSF53474">
    <property type="entry name" value="alpha/beta-Hydrolases"/>
    <property type="match status" value="1"/>
</dbReference>
<comment type="similarity">
    <text evidence="1">Belongs to the UPF0227 family.</text>
</comment>
<name>YCFP_SHIFL</name>
<protein>
    <recommendedName>
        <fullName>UPF0227 protein YcfP</fullName>
    </recommendedName>
</protein>
<keyword id="KW-1185">Reference proteome</keyword>
<organism>
    <name type="scientific">Shigella flexneri</name>
    <dbReference type="NCBI Taxonomy" id="623"/>
    <lineage>
        <taxon>Bacteria</taxon>
        <taxon>Pseudomonadati</taxon>
        <taxon>Pseudomonadota</taxon>
        <taxon>Gammaproteobacteria</taxon>
        <taxon>Enterobacterales</taxon>
        <taxon>Enterobacteriaceae</taxon>
        <taxon>Shigella</taxon>
    </lineage>
</organism>
<accession>P0A8E4</accession>
<accession>P75950</accession>
<sequence length="180" mass="21226">MIIYLHGFDSNSPGNHEKVLQLQFIDPDVRLISYSTRHPKHDMQHLLKEVDKMLQLNVDERPLICGVGLGGYWAERIGFLCDIRQVIFNPNLFPYENMEGKIDRPEEYADIATKCVTNFREKNRDRCLVILSRNDEALNSQRTSEELHHYYEIVWDEEQTHKFKNISPHLQRIKAFKTLG</sequence>
<reference key="1">
    <citation type="journal article" date="2002" name="Nucleic Acids Res.">
        <title>Genome sequence of Shigella flexneri 2a: insights into pathogenicity through comparison with genomes of Escherichia coli K12 and O157.</title>
        <authorList>
            <person name="Jin Q."/>
            <person name="Yuan Z."/>
            <person name="Xu J."/>
            <person name="Wang Y."/>
            <person name="Shen Y."/>
            <person name="Lu W."/>
            <person name="Wang J."/>
            <person name="Liu H."/>
            <person name="Yang J."/>
            <person name="Yang F."/>
            <person name="Zhang X."/>
            <person name="Zhang J."/>
            <person name="Yang G."/>
            <person name="Wu H."/>
            <person name="Qu D."/>
            <person name="Dong J."/>
            <person name="Sun L."/>
            <person name="Xue Y."/>
            <person name="Zhao A."/>
            <person name="Gao Y."/>
            <person name="Zhu J."/>
            <person name="Kan B."/>
            <person name="Ding K."/>
            <person name="Chen S."/>
            <person name="Cheng H."/>
            <person name="Yao Z."/>
            <person name="He B."/>
            <person name="Chen R."/>
            <person name="Ma D."/>
            <person name="Qiang B."/>
            <person name="Wen Y."/>
            <person name="Hou Y."/>
            <person name="Yu J."/>
        </authorList>
    </citation>
    <scope>NUCLEOTIDE SEQUENCE [LARGE SCALE GENOMIC DNA]</scope>
    <source>
        <strain>301 / Serotype 2a</strain>
    </source>
</reference>
<reference key="2">
    <citation type="journal article" date="2003" name="Infect. Immun.">
        <title>Complete genome sequence and comparative genomics of Shigella flexneri serotype 2a strain 2457T.</title>
        <authorList>
            <person name="Wei J."/>
            <person name="Goldberg M.B."/>
            <person name="Burland V."/>
            <person name="Venkatesan M.M."/>
            <person name="Deng W."/>
            <person name="Fournier G."/>
            <person name="Mayhew G.F."/>
            <person name="Plunkett G. III"/>
            <person name="Rose D.J."/>
            <person name="Darling A."/>
            <person name="Mau B."/>
            <person name="Perna N.T."/>
            <person name="Payne S.M."/>
            <person name="Runyen-Janecky L.J."/>
            <person name="Zhou S."/>
            <person name="Schwartz D.C."/>
            <person name="Blattner F.R."/>
        </authorList>
    </citation>
    <scope>NUCLEOTIDE SEQUENCE [LARGE SCALE GENOMIC DNA]</scope>
    <source>
        <strain>ATCC 700930 / 2457T / Serotype 2a</strain>
    </source>
</reference>
<proteinExistence type="inferred from homology"/>
<feature type="chain" id="PRO_0000070324" description="UPF0227 protein YcfP">
    <location>
        <begin position="1"/>
        <end position="180"/>
    </location>
</feature>